<comment type="catalytic activity">
    <reaction>
        <text>tRNA(Thr) + L-threonine + ATP = L-threonyl-tRNA(Thr) + AMP + diphosphate + H(+)</text>
        <dbReference type="Rhea" id="RHEA:24624"/>
        <dbReference type="Rhea" id="RHEA-COMP:9670"/>
        <dbReference type="Rhea" id="RHEA-COMP:9704"/>
        <dbReference type="ChEBI" id="CHEBI:15378"/>
        <dbReference type="ChEBI" id="CHEBI:30616"/>
        <dbReference type="ChEBI" id="CHEBI:33019"/>
        <dbReference type="ChEBI" id="CHEBI:57926"/>
        <dbReference type="ChEBI" id="CHEBI:78442"/>
        <dbReference type="ChEBI" id="CHEBI:78534"/>
        <dbReference type="ChEBI" id="CHEBI:456215"/>
        <dbReference type="EC" id="6.1.1.3"/>
    </reaction>
</comment>
<comment type="subcellular location">
    <subcellularLocation>
        <location evidence="2">Cytoplasm</location>
    </subcellularLocation>
</comment>
<comment type="similarity">
    <text evidence="2">Belongs to the class-II aminoacyl-tRNA synthetase family.</text>
</comment>
<proteinExistence type="inferred from homology"/>
<gene>
    <name evidence="3" type="primary">tars-1</name>
    <name evidence="3" type="synonym">trs-1</name>
    <name type="ORF">C47D12.6</name>
</gene>
<protein>
    <recommendedName>
        <fullName>Threonine--tRNA ligase, cytoplasmic</fullName>
        <ecNumber>6.1.1.3</ecNumber>
    </recommendedName>
    <alternativeName>
        <fullName>Threonyl-tRNA synthetase</fullName>
        <shortName>ThrRS</shortName>
    </alternativeName>
</protein>
<reference key="1">
    <citation type="journal article" date="1998" name="Science">
        <title>Genome sequence of the nematode C. elegans: a platform for investigating biology.</title>
        <authorList>
            <consortium name="The C. elegans sequencing consortium"/>
        </authorList>
    </citation>
    <scope>NUCLEOTIDE SEQUENCE [LARGE SCALE GENOMIC DNA]</scope>
    <source>
        <strain>Bristol N2</strain>
    </source>
</reference>
<name>SYTC_CAEEL</name>
<organism>
    <name type="scientific">Caenorhabditis elegans</name>
    <dbReference type="NCBI Taxonomy" id="6239"/>
    <lineage>
        <taxon>Eukaryota</taxon>
        <taxon>Metazoa</taxon>
        <taxon>Ecdysozoa</taxon>
        <taxon>Nematoda</taxon>
        <taxon>Chromadorea</taxon>
        <taxon>Rhabditida</taxon>
        <taxon>Rhabditina</taxon>
        <taxon>Rhabditomorpha</taxon>
        <taxon>Rhabditoidea</taxon>
        <taxon>Rhabditidae</taxon>
        <taxon>Peloderinae</taxon>
        <taxon>Caenorhabditis</taxon>
    </lineage>
</organism>
<sequence>MRLNCFRIFVHIQKPTQIFKPFYRSLSSEASDKYHFVNGHKMSKAPTDMAPWPAFIEERIKLWDKLKAEYDAEIAAKESEPIQITLPDGKIHEGKTWRTTPFEIAERISKGLAEAAVIAKVNGAVWDLDRPFEGNAKLELLKFDDDEAKQVFWHSSAHVLGEAMERYCGGHLCYGPPIQEGFYYDMWHENRTICPDDFPKIDQIVKAAVKDKQKFERLEMTKEDLLEMFKYNEFKVRIITEKIHTPKTTVYRCGPLIDLCRGPHVRHTGKVKAMAITKNSSSYWEGKADAESLQRLYGISFPDSKQLKEWQKLQEEAAKRDHRKLGKEHDLFFFHQLSPGSAFWYPKGAHIYNKLVDFIRKQYRRRGFTEVITPNMYNKKLWETSGHWQHYSEDMFKIEVEKEEFGLKPMNCPGHCLMFGHMPHTYNELPFRFADFGVLHRNEMSGALTGLTRVRRFQQDDAHIFCRQDQISEEIKQCLDFLEYAYEKVFGFTFKLNLSTRPEGFLGNIETWDKAEADLTNALNASGRKWVLNPGDGAFYGPKIDITIQDALKRNFQCATIQLDFQLPNQFDLSYFDEKGEKQRPVMIHRAVLGSVERMTAILTESYGGKWPFWLSPRQCKIITVHESVRDYANDVKKQIFEAGFEIEYEENCGDTMNKQVRKAQLAQFNFILVIGAKEKENGTVNVRTRDNAVRGEVALDKLISKFRRFADEYVADTEKSEEWA</sequence>
<feature type="chain" id="PRO_0000101122" description="Threonine--tRNA ligase, cytoplasmic">
    <location>
        <begin position="1"/>
        <end position="725"/>
    </location>
</feature>
<feature type="domain" description="TGS" evidence="1">
    <location>
        <begin position="80"/>
        <end position="142"/>
    </location>
</feature>
<keyword id="KW-0030">Aminoacyl-tRNA synthetase</keyword>
<keyword id="KW-0067">ATP-binding</keyword>
<keyword id="KW-0963">Cytoplasm</keyword>
<keyword id="KW-0436">Ligase</keyword>
<keyword id="KW-0547">Nucleotide-binding</keyword>
<keyword id="KW-0648">Protein biosynthesis</keyword>
<keyword id="KW-1185">Reference proteome</keyword>
<dbReference type="EC" id="6.1.1.3"/>
<dbReference type="EMBL" id="Z69902">
    <property type="protein sequence ID" value="CAA93762.1"/>
    <property type="molecule type" value="Genomic_DNA"/>
</dbReference>
<dbReference type="PIR" id="T19994">
    <property type="entry name" value="T19994"/>
</dbReference>
<dbReference type="RefSeq" id="NP_001022033.1">
    <property type="nucleotide sequence ID" value="NM_001026862.7"/>
</dbReference>
<dbReference type="SMR" id="P52709"/>
<dbReference type="BioGRID" id="40095">
    <property type="interactions" value="5"/>
</dbReference>
<dbReference type="DIP" id="DIP-24299N"/>
<dbReference type="FunCoup" id="P52709">
    <property type="interactions" value="2668"/>
</dbReference>
<dbReference type="STRING" id="6239.C47D12.6a.1"/>
<dbReference type="PaxDb" id="6239-C47D12.6a"/>
<dbReference type="PeptideAtlas" id="P52709"/>
<dbReference type="EnsemblMetazoa" id="C47D12.6a.1">
    <property type="protein sequence ID" value="C47D12.6a.1"/>
    <property type="gene ID" value="WBGene00006617"/>
</dbReference>
<dbReference type="GeneID" id="174790"/>
<dbReference type="KEGG" id="cel:CELE_C47D12.6"/>
<dbReference type="UCSC" id="C47D12.6b.1">
    <property type="organism name" value="c. elegans"/>
</dbReference>
<dbReference type="AGR" id="WB:WBGene00006617"/>
<dbReference type="CTD" id="174790"/>
<dbReference type="WormBase" id="C47D12.6a">
    <property type="protein sequence ID" value="CE05434"/>
    <property type="gene ID" value="WBGene00006617"/>
    <property type="gene designation" value="tars-1"/>
</dbReference>
<dbReference type="eggNOG" id="KOG1637">
    <property type="taxonomic scope" value="Eukaryota"/>
</dbReference>
<dbReference type="InParanoid" id="P52709"/>
<dbReference type="OMA" id="WYADGMY"/>
<dbReference type="OrthoDB" id="5423599at2759"/>
<dbReference type="PhylomeDB" id="P52709"/>
<dbReference type="PRO" id="PR:P52709"/>
<dbReference type="Proteomes" id="UP000001940">
    <property type="component" value="Chromosome II"/>
</dbReference>
<dbReference type="Bgee" id="WBGene00006617">
    <property type="expression patterns" value="Expressed in adult organism and 4 other cell types or tissues"/>
</dbReference>
<dbReference type="ExpressionAtlas" id="P52709">
    <property type="expression patterns" value="baseline and differential"/>
</dbReference>
<dbReference type="GO" id="GO:0005739">
    <property type="term" value="C:mitochondrion"/>
    <property type="evidence" value="ECO:0000318"/>
    <property type="project" value="GO_Central"/>
</dbReference>
<dbReference type="GO" id="GO:0005524">
    <property type="term" value="F:ATP binding"/>
    <property type="evidence" value="ECO:0007669"/>
    <property type="project" value="UniProtKB-KW"/>
</dbReference>
<dbReference type="GO" id="GO:0004829">
    <property type="term" value="F:threonine-tRNA ligase activity"/>
    <property type="evidence" value="ECO:0000318"/>
    <property type="project" value="GO_Central"/>
</dbReference>
<dbReference type="GO" id="GO:0008340">
    <property type="term" value="P:determination of adult lifespan"/>
    <property type="evidence" value="ECO:0000315"/>
    <property type="project" value="WormBase"/>
</dbReference>
<dbReference type="GO" id="GO:0006435">
    <property type="term" value="P:threonyl-tRNA aminoacylation"/>
    <property type="evidence" value="ECO:0000318"/>
    <property type="project" value="GO_Central"/>
</dbReference>
<dbReference type="CDD" id="cd01667">
    <property type="entry name" value="TGS_ThrRS"/>
    <property type="match status" value="1"/>
</dbReference>
<dbReference type="CDD" id="cd00860">
    <property type="entry name" value="ThrRS_anticodon"/>
    <property type="match status" value="1"/>
</dbReference>
<dbReference type="CDD" id="cd00771">
    <property type="entry name" value="ThrRS_core"/>
    <property type="match status" value="1"/>
</dbReference>
<dbReference type="FunFam" id="3.30.930.10:FF:000009">
    <property type="entry name" value="Threonine--tRNA ligase 2, cytoplasmic"/>
    <property type="match status" value="1"/>
</dbReference>
<dbReference type="FunFam" id="3.40.50.800:FF:000019">
    <property type="entry name" value="Threonine--tRNA ligase mitochondrial 1"/>
    <property type="match status" value="1"/>
</dbReference>
<dbReference type="FunFam" id="3.10.20.30:FF:000006">
    <property type="entry name" value="Threonine--tRNA ligase, cytoplasmic"/>
    <property type="match status" value="1"/>
</dbReference>
<dbReference type="FunFam" id="3.30.980.10:FF:000003">
    <property type="entry name" value="Threonine--tRNA ligase, cytoplasmic"/>
    <property type="match status" value="1"/>
</dbReference>
<dbReference type="Gene3D" id="3.10.20.30">
    <property type="match status" value="1"/>
</dbReference>
<dbReference type="Gene3D" id="3.40.50.800">
    <property type="entry name" value="Anticodon-binding domain"/>
    <property type="match status" value="1"/>
</dbReference>
<dbReference type="Gene3D" id="3.30.930.10">
    <property type="entry name" value="Bira Bifunctional Protein, Domain 2"/>
    <property type="match status" value="1"/>
</dbReference>
<dbReference type="Gene3D" id="3.30.980.10">
    <property type="entry name" value="Threonyl-trna Synthetase, Chain A, domain 2"/>
    <property type="match status" value="1"/>
</dbReference>
<dbReference type="HAMAP" id="MF_00184">
    <property type="entry name" value="Thr_tRNA_synth"/>
    <property type="match status" value="1"/>
</dbReference>
<dbReference type="InterPro" id="IPR002314">
    <property type="entry name" value="aa-tRNA-synt_IIb"/>
</dbReference>
<dbReference type="InterPro" id="IPR006195">
    <property type="entry name" value="aa-tRNA-synth_II"/>
</dbReference>
<dbReference type="InterPro" id="IPR045864">
    <property type="entry name" value="aa-tRNA-synth_II/BPL/LPL"/>
</dbReference>
<dbReference type="InterPro" id="IPR004154">
    <property type="entry name" value="Anticodon-bd"/>
</dbReference>
<dbReference type="InterPro" id="IPR036621">
    <property type="entry name" value="Anticodon-bd_dom_sf"/>
</dbReference>
<dbReference type="InterPro" id="IPR012675">
    <property type="entry name" value="Beta-grasp_dom_sf"/>
</dbReference>
<dbReference type="InterPro" id="IPR004095">
    <property type="entry name" value="TGS"/>
</dbReference>
<dbReference type="InterPro" id="IPR012676">
    <property type="entry name" value="TGS-like"/>
</dbReference>
<dbReference type="InterPro" id="IPR002320">
    <property type="entry name" value="Thr-tRNA-ligase_IIa"/>
</dbReference>
<dbReference type="InterPro" id="IPR018163">
    <property type="entry name" value="Thr/Ala-tRNA-synth_IIc_edit"/>
</dbReference>
<dbReference type="InterPro" id="IPR047246">
    <property type="entry name" value="ThrRS_anticodon"/>
</dbReference>
<dbReference type="InterPro" id="IPR033728">
    <property type="entry name" value="ThrRS_core"/>
</dbReference>
<dbReference type="InterPro" id="IPR012947">
    <property type="entry name" value="tRNA_SAD"/>
</dbReference>
<dbReference type="NCBIfam" id="TIGR00418">
    <property type="entry name" value="thrS"/>
    <property type="match status" value="1"/>
</dbReference>
<dbReference type="PANTHER" id="PTHR11451:SF46">
    <property type="entry name" value="THREONINE--TRNA LIGASE"/>
    <property type="match status" value="1"/>
</dbReference>
<dbReference type="PANTHER" id="PTHR11451">
    <property type="entry name" value="THREONINE-TRNA LIGASE"/>
    <property type="match status" value="1"/>
</dbReference>
<dbReference type="Pfam" id="PF03129">
    <property type="entry name" value="HGTP_anticodon"/>
    <property type="match status" value="1"/>
</dbReference>
<dbReference type="Pfam" id="PF02824">
    <property type="entry name" value="TGS"/>
    <property type="match status" value="1"/>
</dbReference>
<dbReference type="Pfam" id="PF00587">
    <property type="entry name" value="tRNA-synt_2b"/>
    <property type="match status" value="1"/>
</dbReference>
<dbReference type="Pfam" id="PF07973">
    <property type="entry name" value="tRNA_SAD"/>
    <property type="match status" value="1"/>
</dbReference>
<dbReference type="PRINTS" id="PR01047">
    <property type="entry name" value="TRNASYNTHTHR"/>
</dbReference>
<dbReference type="SMART" id="SM00863">
    <property type="entry name" value="tRNA_SAD"/>
    <property type="match status" value="1"/>
</dbReference>
<dbReference type="SUPFAM" id="SSF52954">
    <property type="entry name" value="Class II aaRS ABD-related"/>
    <property type="match status" value="1"/>
</dbReference>
<dbReference type="SUPFAM" id="SSF55681">
    <property type="entry name" value="Class II aaRS and biotin synthetases"/>
    <property type="match status" value="1"/>
</dbReference>
<dbReference type="SUPFAM" id="SSF81271">
    <property type="entry name" value="TGS-like"/>
    <property type="match status" value="1"/>
</dbReference>
<dbReference type="SUPFAM" id="SSF55186">
    <property type="entry name" value="ThrRS/AlaRS common domain"/>
    <property type="match status" value="1"/>
</dbReference>
<dbReference type="PROSITE" id="PS50862">
    <property type="entry name" value="AA_TRNA_LIGASE_II"/>
    <property type="match status" value="1"/>
</dbReference>
<dbReference type="PROSITE" id="PS51880">
    <property type="entry name" value="TGS"/>
    <property type="match status" value="1"/>
</dbReference>
<evidence type="ECO:0000255" key="1">
    <source>
        <dbReference type="PROSITE-ProRule" id="PRU01228"/>
    </source>
</evidence>
<evidence type="ECO:0000305" key="2"/>
<evidence type="ECO:0000312" key="3">
    <source>
        <dbReference type="WormBase" id="C47D12.6a"/>
    </source>
</evidence>
<accession>P52709</accession>